<feature type="chain" id="PRO_0000202308" description="Uncharacterized protein TP_0707">
    <location>
        <begin position="1"/>
        <end position="159"/>
    </location>
</feature>
<feature type="transmembrane region" description="Helical" evidence="1">
    <location>
        <begin position="59"/>
        <end position="79"/>
    </location>
</feature>
<feature type="transmembrane region" description="Helical" evidence="1">
    <location>
        <begin position="91"/>
        <end position="113"/>
    </location>
</feature>
<protein>
    <recommendedName>
        <fullName>Uncharacterized protein TP_0707</fullName>
    </recommendedName>
</protein>
<keyword id="KW-1003">Cell membrane</keyword>
<keyword id="KW-0472">Membrane</keyword>
<keyword id="KW-1185">Reference proteome</keyword>
<keyword id="KW-0812">Transmembrane</keyword>
<keyword id="KW-1133">Transmembrane helix</keyword>
<reference key="1">
    <citation type="journal article" date="1998" name="Science">
        <title>Complete genome sequence of Treponema pallidum, the syphilis spirochete.</title>
        <authorList>
            <person name="Fraser C.M."/>
            <person name="Norris S.J."/>
            <person name="Weinstock G.M."/>
            <person name="White O."/>
            <person name="Sutton G.G."/>
            <person name="Dodson R.J."/>
            <person name="Gwinn M.L."/>
            <person name="Hickey E.K."/>
            <person name="Clayton R.A."/>
            <person name="Ketchum K.A."/>
            <person name="Sodergren E."/>
            <person name="Hardham J.M."/>
            <person name="McLeod M.P."/>
            <person name="Salzberg S.L."/>
            <person name="Peterson J.D."/>
            <person name="Khalak H.G."/>
            <person name="Richardson D.L."/>
            <person name="Howell J.K."/>
            <person name="Chidambaram M."/>
            <person name="Utterback T.R."/>
            <person name="McDonald L.A."/>
            <person name="Artiach P."/>
            <person name="Bowman C."/>
            <person name="Cotton M.D."/>
            <person name="Fujii C."/>
            <person name="Garland S.A."/>
            <person name="Hatch B."/>
            <person name="Horst K."/>
            <person name="Roberts K.M."/>
            <person name="Sandusky M."/>
            <person name="Weidman J.F."/>
            <person name="Smith H.O."/>
            <person name="Venter J.C."/>
        </authorList>
    </citation>
    <scope>NUCLEOTIDE SEQUENCE [LARGE SCALE GENOMIC DNA]</scope>
    <source>
        <strain>Nichols</strain>
    </source>
</reference>
<evidence type="ECO:0000255" key="1"/>
<evidence type="ECO:0000305" key="2"/>
<comment type="subcellular location">
    <subcellularLocation>
        <location evidence="2">Cell membrane</location>
        <topology evidence="2">Multi-pass membrane protein</topology>
    </subcellularLocation>
</comment>
<sequence>MRGTPAYHAVSGVPCSACTCTQVAVQLALSWRGSMGRLKRCEVRRRPCALWAIVRVARIGALAAMLAVLSFALGCALVYPLWALAVHRPRVFSVLSGLLYGGGAVLWGLRRVCNALSYARVRRAGRRAAAQEPCVLVQAGEVGAMGLSSSAEVRPAQEC</sequence>
<gene>
    <name type="ordered locus">TP_0707</name>
</gene>
<organism>
    <name type="scientific">Treponema pallidum (strain Nichols)</name>
    <dbReference type="NCBI Taxonomy" id="243276"/>
    <lineage>
        <taxon>Bacteria</taxon>
        <taxon>Pseudomonadati</taxon>
        <taxon>Spirochaetota</taxon>
        <taxon>Spirochaetia</taxon>
        <taxon>Spirochaetales</taxon>
        <taxon>Treponemataceae</taxon>
        <taxon>Treponema</taxon>
    </lineage>
</organism>
<proteinExistence type="predicted"/>
<accession>O83705</accession>
<dbReference type="EMBL" id="AE000520">
    <property type="protein sequence ID" value="AAC65694.1"/>
    <property type="molecule type" value="Genomic_DNA"/>
</dbReference>
<dbReference type="PIR" id="G71289">
    <property type="entry name" value="G71289"/>
</dbReference>
<dbReference type="RefSeq" id="WP_010882152.1">
    <property type="nucleotide sequence ID" value="NC_021490.2"/>
</dbReference>
<dbReference type="STRING" id="243276.TP_0707"/>
<dbReference type="EnsemblBacteria" id="AAC65694">
    <property type="protein sequence ID" value="AAC65694"/>
    <property type="gene ID" value="TP_0707"/>
</dbReference>
<dbReference type="KEGG" id="tpa:TP_0707"/>
<dbReference type="KEGG" id="tpw:TPANIC_0707"/>
<dbReference type="HOGENOM" id="CLU_140399_0_0_12"/>
<dbReference type="Proteomes" id="UP000000811">
    <property type="component" value="Chromosome"/>
</dbReference>
<dbReference type="GO" id="GO:0005886">
    <property type="term" value="C:plasma membrane"/>
    <property type="evidence" value="ECO:0007669"/>
    <property type="project" value="UniProtKB-SubCell"/>
</dbReference>
<name>Y707_TREPA</name>